<organismHost>
    <name type="scientific">Aves</name>
    <dbReference type="NCBI Taxonomy" id="8782"/>
</organismHost>
<organismHost>
    <name type="scientific">Homo sapiens</name>
    <name type="common">Human</name>
    <dbReference type="NCBI Taxonomy" id="9606"/>
</organismHost>
<organismHost>
    <name type="scientific">Mysticeti</name>
    <name type="common">baleen whales</name>
    <dbReference type="NCBI Taxonomy" id="9761"/>
</organismHost>
<organismHost>
    <name type="scientific">Phocidae</name>
    <name type="common">true seals</name>
    <dbReference type="NCBI Taxonomy" id="9709"/>
</organismHost>
<organismHost>
    <name type="scientific">Sus scrofa</name>
    <name type="common">Pig</name>
    <dbReference type="NCBI Taxonomy" id="9823"/>
</organismHost>
<name>NRAM_I69A0</name>
<sequence>MNPNQKIITIGSVSLTIATVCFLMQIAILVTTVTLHFRQYECDSPANNQVMPCEPTIIERNITEIVYLNNTTIEKEICPKLVEYRNWSKPQCKITGFAPFSKDNSIRLSAGGDIWVTREPYVSCDPGKCYQFALGQGTTLDNKHSNDTIHDRIPHRTLLMNELGVPFHLGTRQVCIAWSSSSCHDGKAWLHVCVTGDDKNATASFIYDGRLVDSIGSWSQNILRTQESECVCINGTCTVVMTDGSASGRADTRILFIEEGKIVHISPLSGSAQHVEECSCYPRYPGVRCICRDNWKGSNRPVVDINVEDYSIDSSYVCSGLVGDTPRNNDRSSNSNCRNPNNERGNHGVKGWAFDDGNDVWMGRTISKDLRSGYETFKVIGGWSTPNSKSQINRQVIVDSDNRSGYSGIFSVEGKSCINRCFYVELIRGREQETRVWWTSNSIVVFCGTSGTYGTGSWPDGADINLMPI</sequence>
<organism>
    <name type="scientific">Influenza A virus (strain A/England/878/1969 H3N2)</name>
    <dbReference type="NCBI Taxonomy" id="387147"/>
    <lineage>
        <taxon>Viruses</taxon>
        <taxon>Riboviria</taxon>
        <taxon>Orthornavirae</taxon>
        <taxon>Negarnaviricota</taxon>
        <taxon>Polyploviricotina</taxon>
        <taxon>Insthoviricetes</taxon>
        <taxon>Articulavirales</taxon>
        <taxon>Orthomyxoviridae</taxon>
        <taxon>Alphainfluenzavirus</taxon>
        <taxon>Alphainfluenzavirus influenzae</taxon>
        <taxon>Influenza A virus</taxon>
    </lineage>
</organism>
<accession>Q6XTN2</accession>
<proteinExistence type="inferred from homology"/>
<gene>
    <name evidence="1" type="primary">NA</name>
</gene>
<protein>
    <recommendedName>
        <fullName evidence="1">Neuraminidase</fullName>
        <ecNumber evidence="1">3.2.1.18</ecNumber>
    </recommendedName>
</protein>
<feature type="chain" id="PRO_0000280129" description="Neuraminidase">
    <location>
        <begin position="1"/>
        <end position="469"/>
    </location>
</feature>
<feature type="topological domain" description="Intravirion" evidence="1">
    <location>
        <begin position="1"/>
        <end position="9"/>
    </location>
</feature>
<feature type="transmembrane region" description="Helical" evidence="1">
    <location>
        <begin position="10"/>
        <end position="30"/>
    </location>
</feature>
<feature type="topological domain" description="Virion surface" evidence="1">
    <location>
        <begin position="31"/>
        <end position="469"/>
    </location>
</feature>
<feature type="region of interest" description="Involved in apical transport and lipid raft association" evidence="1">
    <location>
        <begin position="11"/>
        <end position="33"/>
    </location>
</feature>
<feature type="region of interest" description="Hypervariable stalk region" evidence="1">
    <location>
        <begin position="36"/>
        <end position="88"/>
    </location>
</feature>
<feature type="region of interest" description="Head of neuraminidase" evidence="1">
    <location>
        <begin position="91"/>
        <end position="469"/>
    </location>
</feature>
<feature type="region of interest" description="Disordered" evidence="2">
    <location>
        <begin position="323"/>
        <end position="350"/>
    </location>
</feature>
<feature type="compositionally biased region" description="Low complexity" evidence="2">
    <location>
        <begin position="331"/>
        <end position="343"/>
    </location>
</feature>
<feature type="active site" description="Proton donor/acceptor" evidence="1">
    <location>
        <position position="151"/>
    </location>
</feature>
<feature type="active site" description="Nucleophile" evidence="1">
    <location>
        <position position="406"/>
    </location>
</feature>
<feature type="binding site" evidence="1">
    <location>
        <position position="118"/>
    </location>
    <ligand>
        <name>substrate</name>
    </ligand>
</feature>
<feature type="binding site" evidence="1">
    <location>
        <position position="152"/>
    </location>
    <ligand>
        <name>substrate</name>
    </ligand>
</feature>
<feature type="binding site" evidence="1">
    <location>
        <begin position="276"/>
        <end position="277"/>
    </location>
    <ligand>
        <name>substrate</name>
    </ligand>
</feature>
<feature type="binding site" evidence="1">
    <location>
        <position position="292"/>
    </location>
    <ligand>
        <name>substrate</name>
    </ligand>
</feature>
<feature type="binding site" evidence="1">
    <location>
        <position position="293"/>
    </location>
    <ligand>
        <name>Ca(2+)</name>
        <dbReference type="ChEBI" id="CHEBI:29108"/>
    </ligand>
</feature>
<feature type="binding site" evidence="1">
    <location>
        <position position="297"/>
    </location>
    <ligand>
        <name>Ca(2+)</name>
        <dbReference type="ChEBI" id="CHEBI:29108"/>
    </ligand>
</feature>
<feature type="binding site" evidence="1">
    <location>
        <position position="324"/>
    </location>
    <ligand>
        <name>Ca(2+)</name>
        <dbReference type="ChEBI" id="CHEBI:29108"/>
    </ligand>
</feature>
<feature type="binding site" evidence="1">
    <location>
        <position position="371"/>
    </location>
    <ligand>
        <name>substrate</name>
    </ligand>
</feature>
<feature type="glycosylation site" description="N-linked (GlcNAc...) asparagine; by host" evidence="1">
    <location>
        <position position="61"/>
    </location>
</feature>
<feature type="glycosylation site" description="N-linked (GlcNAc...) asparagine; by host" evidence="1">
    <location>
        <position position="69"/>
    </location>
</feature>
<feature type="glycosylation site" description="N-linked (GlcNAc...) asparagine; by host" evidence="1">
    <location>
        <position position="70"/>
    </location>
</feature>
<feature type="glycosylation site" description="N-linked (GlcNAc...) asparagine; by host" evidence="1">
    <location>
        <position position="86"/>
    </location>
</feature>
<feature type="glycosylation site" description="N-linked (GlcNAc...) asparagine; by host" evidence="1">
    <location>
        <position position="146"/>
    </location>
</feature>
<feature type="glycosylation site" description="N-linked (GlcNAc...) asparagine; by host" evidence="1">
    <location>
        <position position="200"/>
    </location>
</feature>
<feature type="glycosylation site" description="N-linked (GlcNAc...) asparagine; by host" evidence="1">
    <location>
        <position position="234"/>
    </location>
</feature>
<feature type="glycosylation site" description="N-linked (GlcNAc...) asparagine; by host" evidence="1">
    <location>
        <position position="402"/>
    </location>
</feature>
<feature type="disulfide bond" evidence="1">
    <location>
        <begin position="92"/>
        <end position="417"/>
    </location>
</feature>
<feature type="disulfide bond" evidence="1">
    <location>
        <begin position="124"/>
        <end position="129"/>
    </location>
</feature>
<feature type="disulfide bond" evidence="1">
    <location>
        <begin position="183"/>
        <end position="230"/>
    </location>
</feature>
<feature type="disulfide bond" evidence="1">
    <location>
        <begin position="232"/>
        <end position="237"/>
    </location>
</feature>
<feature type="disulfide bond" evidence="1">
    <location>
        <begin position="278"/>
        <end position="291"/>
    </location>
</feature>
<feature type="disulfide bond" evidence="1">
    <location>
        <begin position="280"/>
        <end position="289"/>
    </location>
</feature>
<feature type="disulfide bond" evidence="1">
    <location>
        <begin position="318"/>
        <end position="337"/>
    </location>
</feature>
<feature type="disulfide bond" evidence="1">
    <location>
        <begin position="421"/>
        <end position="447"/>
    </location>
</feature>
<reference key="1">
    <citation type="journal article" date="2004" name="Virology">
        <title>Genetic analysis of human H2N2 and early H3N2 influenza viruses, 1957-1972: evidence for genetic divergence and multiple reassortment events.</title>
        <authorList>
            <person name="Lindstrom S.E."/>
            <person name="Cox N.J."/>
            <person name="Klimov A."/>
        </authorList>
    </citation>
    <scope>NUCLEOTIDE SEQUENCE [GENOMIC RNA]</scope>
</reference>
<reference key="2">
    <citation type="journal article" date="2004" name="Virus Res.">
        <title>Assembly and budding of influenza virus.</title>
        <authorList>
            <person name="Nayak D.P."/>
            <person name="Hui E.K."/>
            <person name="Barman S."/>
        </authorList>
    </citation>
    <scope>REVIEW</scope>
</reference>
<reference key="3">
    <citation type="journal article" date="2005" name="N. Engl. J. Med.">
        <title>Neuraminidase inhibitors for influenza.</title>
        <authorList>
            <person name="Moscona A."/>
        </authorList>
    </citation>
    <scope>REVIEW</scope>
</reference>
<reference key="4">
    <citation type="journal article" date="2005" name="Biol. Pharm. Bull.">
        <title>Sialobiology of influenza: molecular mechanism of host range variation of influenza viruses.</title>
        <authorList>
            <person name="Suzuki Y."/>
        </authorList>
    </citation>
    <scope>REVIEW</scope>
</reference>
<comment type="function">
    <text evidence="1">Catalyzes the removal of terminal sialic acid residues from viral and cellular glycoconjugates. Cleaves off the terminal sialic acids on the glycosylated HA during virus budding to facilitate virus release. Additionally helps virus spread through the circulation by further removing sialic acids from the cell surface. These cleavages prevent self-aggregation and ensure the efficient spread of the progeny virus from cell to cell. Otherwise, infection would be limited to one round of replication. Described as a receptor-destroying enzyme because it cleaves a terminal sialic acid from the cellular receptors. May facilitate viral invasion of the upper airways by cleaving the sialic acid moieties on the mucin of the airway epithelial cells. Likely to plays a role in the budding process through its association with lipid rafts during intracellular transport. May additionally display a raft-association independent effect on budding. Plays a role in the determination of host range restriction on replication and virulence. Sialidase activity in late endosome/lysosome traffic seems to enhance virus replication.</text>
</comment>
<comment type="catalytic activity">
    <reaction evidence="1">
        <text>Hydrolysis of alpha-(2-&gt;3)-, alpha-(2-&gt;6)-, alpha-(2-&gt;8)- glycosidic linkages of terminal sialic acid residues in oligosaccharides, glycoproteins, glycolipids, colominic acid and synthetic substrates.</text>
        <dbReference type="EC" id="3.2.1.18"/>
    </reaction>
</comment>
<comment type="cofactor">
    <cofactor evidence="1">
        <name>Ca(2+)</name>
        <dbReference type="ChEBI" id="CHEBI:29108"/>
    </cofactor>
</comment>
<comment type="activity regulation">
    <text evidence="1">Inhibited by the neuraminidase inhibitors zanamivir (Relenza) and oseltamivir (Tamiflu). These drugs interfere with the release of progeny virus from infected cells and are effective against all influenza strains. Resistance to neuraminidase inhibitors is quite rare.</text>
</comment>
<comment type="subunit">
    <text evidence="1">Homotetramer.</text>
</comment>
<comment type="subcellular location">
    <subcellularLocation>
        <location evidence="1">Virion membrane</location>
    </subcellularLocation>
    <subcellularLocation>
        <location evidence="1">Host apical cell membrane</location>
        <topology evidence="1">Single-pass type II membrane protein</topology>
    </subcellularLocation>
    <text evidence="1">Preferentially accumulates at the apical plasma membrane in infected polarized epithelial cells, which is the virus assembly site. Uses lipid rafts for cell surface transport and apical sorting. In the virion, forms a mushroom-shaped spike on the surface of the membrane.</text>
</comment>
<comment type="domain">
    <text evidence="1">Intact N-terminus is essential for virion morphogenesis. Possesses two apical sorting signals, one in the ectodomain, which is likely to be a glycan, and the other in the transmembrane domain. The transmembrane domain also plays a role in lipid raft association.</text>
</comment>
<comment type="PTM">
    <text evidence="1">N-glycosylated.</text>
</comment>
<comment type="miscellaneous">
    <text>The influenza A genome consist of 8 RNA segments. Genetic variation of hemagglutinin and/or neuraminidase genes results in the emergence of new influenza strains. The mechanism of variation can be the result of point mutations or the result of genetic reassortment between segments of two different strains.</text>
</comment>
<comment type="similarity">
    <text evidence="1">Belongs to the glycosyl hydrolase 34 family.</text>
</comment>
<evidence type="ECO:0000255" key="1">
    <source>
        <dbReference type="HAMAP-Rule" id="MF_04071"/>
    </source>
</evidence>
<evidence type="ECO:0000256" key="2">
    <source>
        <dbReference type="SAM" id="MobiDB-lite"/>
    </source>
</evidence>
<keyword id="KW-0106">Calcium</keyword>
<keyword id="KW-1015">Disulfide bond</keyword>
<keyword id="KW-0325">Glycoprotein</keyword>
<keyword id="KW-0326">Glycosidase</keyword>
<keyword id="KW-1032">Host cell membrane</keyword>
<keyword id="KW-1043">Host membrane</keyword>
<keyword id="KW-0378">Hydrolase</keyword>
<keyword id="KW-0472">Membrane</keyword>
<keyword id="KW-0479">Metal-binding</keyword>
<keyword id="KW-0735">Signal-anchor</keyword>
<keyword id="KW-0812">Transmembrane</keyword>
<keyword id="KW-1133">Transmembrane helix</keyword>
<keyword id="KW-0946">Virion</keyword>
<dbReference type="EC" id="3.2.1.18" evidence="1"/>
<dbReference type="EMBL" id="AY210120">
    <property type="protein sequence ID" value="AAO46476.1"/>
    <property type="molecule type" value="Genomic_RNA"/>
</dbReference>
<dbReference type="SMR" id="Q6XTN2"/>
<dbReference type="CAZy" id="GH34">
    <property type="family name" value="Glycoside Hydrolase Family 34"/>
</dbReference>
<dbReference type="GlyCosmos" id="Q6XTN2">
    <property type="glycosylation" value="8 sites, No reported glycans"/>
</dbReference>
<dbReference type="GO" id="GO:0020002">
    <property type="term" value="C:host cell plasma membrane"/>
    <property type="evidence" value="ECO:0007669"/>
    <property type="project" value="UniProtKB-SubCell"/>
</dbReference>
<dbReference type="GO" id="GO:0016020">
    <property type="term" value="C:membrane"/>
    <property type="evidence" value="ECO:0007669"/>
    <property type="project" value="UniProtKB-UniRule"/>
</dbReference>
<dbReference type="GO" id="GO:0055036">
    <property type="term" value="C:virion membrane"/>
    <property type="evidence" value="ECO:0007669"/>
    <property type="project" value="UniProtKB-SubCell"/>
</dbReference>
<dbReference type="GO" id="GO:0004308">
    <property type="term" value="F:exo-alpha-sialidase activity"/>
    <property type="evidence" value="ECO:0007669"/>
    <property type="project" value="UniProtKB-UniRule"/>
</dbReference>
<dbReference type="GO" id="GO:0046872">
    <property type="term" value="F:metal ion binding"/>
    <property type="evidence" value="ECO:0007669"/>
    <property type="project" value="UniProtKB-UniRule"/>
</dbReference>
<dbReference type="GO" id="GO:0005975">
    <property type="term" value="P:carbohydrate metabolic process"/>
    <property type="evidence" value="ECO:0007669"/>
    <property type="project" value="InterPro"/>
</dbReference>
<dbReference type="GO" id="GO:0046761">
    <property type="term" value="P:viral budding from plasma membrane"/>
    <property type="evidence" value="ECO:0007669"/>
    <property type="project" value="UniProtKB-UniRule"/>
</dbReference>
<dbReference type="CDD" id="cd15483">
    <property type="entry name" value="Influenza_NA"/>
    <property type="match status" value="1"/>
</dbReference>
<dbReference type="Gene3D" id="2.120.10.10">
    <property type="match status" value="1"/>
</dbReference>
<dbReference type="HAMAP" id="MF_04071">
    <property type="entry name" value="INFV_NRAM"/>
    <property type="match status" value="1"/>
</dbReference>
<dbReference type="InterPro" id="IPR001860">
    <property type="entry name" value="Glyco_hydro_34"/>
</dbReference>
<dbReference type="InterPro" id="IPR033654">
    <property type="entry name" value="Sialidase_Influenza_A/B"/>
</dbReference>
<dbReference type="InterPro" id="IPR036278">
    <property type="entry name" value="Sialidase_sf"/>
</dbReference>
<dbReference type="Pfam" id="PF00064">
    <property type="entry name" value="Neur"/>
    <property type="match status" value="1"/>
</dbReference>
<dbReference type="SUPFAM" id="SSF50939">
    <property type="entry name" value="Sialidases"/>
    <property type="match status" value="1"/>
</dbReference>